<organism>
    <name type="scientific">Dichelobacter nodosus (strain VCS1703A)</name>
    <dbReference type="NCBI Taxonomy" id="246195"/>
    <lineage>
        <taxon>Bacteria</taxon>
        <taxon>Pseudomonadati</taxon>
        <taxon>Pseudomonadota</taxon>
        <taxon>Gammaproteobacteria</taxon>
        <taxon>Cardiobacteriales</taxon>
        <taxon>Cardiobacteriaceae</taxon>
        <taxon>Dichelobacter</taxon>
    </lineage>
</organism>
<protein>
    <recommendedName>
        <fullName evidence="1">Indole-3-glycerol phosphate synthase</fullName>
        <shortName evidence="1">IGPS</shortName>
        <ecNumber evidence="1">4.1.1.48</ecNumber>
    </recommendedName>
</protein>
<feature type="chain" id="PRO_1000057872" description="Indole-3-glycerol phosphate synthase">
    <location>
        <begin position="1"/>
        <end position="267"/>
    </location>
</feature>
<evidence type="ECO:0000255" key="1">
    <source>
        <dbReference type="HAMAP-Rule" id="MF_00134"/>
    </source>
</evidence>
<keyword id="KW-0028">Amino-acid biosynthesis</keyword>
<keyword id="KW-0057">Aromatic amino acid biosynthesis</keyword>
<keyword id="KW-0210">Decarboxylase</keyword>
<keyword id="KW-0456">Lyase</keyword>
<keyword id="KW-1185">Reference proteome</keyword>
<keyword id="KW-0822">Tryptophan biosynthesis</keyword>
<reference key="1">
    <citation type="journal article" date="2007" name="Nat. Biotechnol.">
        <title>Genome sequence and identification of candidate vaccine antigens from the animal pathogen Dichelobacter nodosus.</title>
        <authorList>
            <person name="Myers G.S.A."/>
            <person name="Parker D."/>
            <person name="Al-Hasani K."/>
            <person name="Kennan R.M."/>
            <person name="Seemann T."/>
            <person name="Ren Q."/>
            <person name="Badger J.H."/>
            <person name="Selengut J.D."/>
            <person name="Deboy R.T."/>
            <person name="Tettelin H."/>
            <person name="Boyce J.D."/>
            <person name="McCarl V.P."/>
            <person name="Han X."/>
            <person name="Nelson W.C."/>
            <person name="Madupu R."/>
            <person name="Mohamoud Y."/>
            <person name="Holley T."/>
            <person name="Fedorova N."/>
            <person name="Khouri H."/>
            <person name="Bottomley S.P."/>
            <person name="Whittington R.J."/>
            <person name="Adler B."/>
            <person name="Songer J.G."/>
            <person name="Rood J.I."/>
            <person name="Paulsen I.T."/>
        </authorList>
    </citation>
    <scope>NUCLEOTIDE SEQUENCE [LARGE SCALE GENOMIC DNA]</scope>
    <source>
        <strain>VCS1703A</strain>
    </source>
</reference>
<accession>A5EVG3</accession>
<name>TRPC_DICNV</name>
<sequence length="267" mass="29716">MTKILDDIVAYKQQEIAALKQQKTEASLIAELETLTDAPRGFMRALRDCRDRGGVAVVAEIKRASPNQGLLREQFMPELLAQECVQYGASCLSVFTDTHFFYGDVAYLSAVKKAVPVPVLRKDFIISRYQILESRLLGVDCILLIVAILTDEQLQEFVVLAHDLGMDVLIEIHDENDLKRALNVPVRTLAINNRNPEDFNASLEKSAQLRQQLPKDYFVISESGINTHADVVYLLNCGLDAVLIGGALMSAEFAGEALHHLIYGKED</sequence>
<dbReference type="EC" id="4.1.1.48" evidence="1"/>
<dbReference type="EMBL" id="CP000513">
    <property type="protein sequence ID" value="ABQ13361.1"/>
    <property type="molecule type" value="Genomic_DNA"/>
</dbReference>
<dbReference type="RefSeq" id="WP_012030919.1">
    <property type="nucleotide sequence ID" value="NC_009446.1"/>
</dbReference>
<dbReference type="SMR" id="A5EVG3"/>
<dbReference type="STRING" id="246195.DNO_0585"/>
<dbReference type="KEGG" id="dno:DNO_0585"/>
<dbReference type="eggNOG" id="COG0134">
    <property type="taxonomic scope" value="Bacteria"/>
</dbReference>
<dbReference type="HOGENOM" id="CLU_034247_2_0_6"/>
<dbReference type="OrthoDB" id="9804217at2"/>
<dbReference type="UniPathway" id="UPA00035">
    <property type="reaction ID" value="UER00043"/>
</dbReference>
<dbReference type="Proteomes" id="UP000000248">
    <property type="component" value="Chromosome"/>
</dbReference>
<dbReference type="GO" id="GO:0004425">
    <property type="term" value="F:indole-3-glycerol-phosphate synthase activity"/>
    <property type="evidence" value="ECO:0007669"/>
    <property type="project" value="UniProtKB-UniRule"/>
</dbReference>
<dbReference type="GO" id="GO:0004640">
    <property type="term" value="F:phosphoribosylanthranilate isomerase activity"/>
    <property type="evidence" value="ECO:0007669"/>
    <property type="project" value="TreeGrafter"/>
</dbReference>
<dbReference type="GO" id="GO:0000162">
    <property type="term" value="P:L-tryptophan biosynthetic process"/>
    <property type="evidence" value="ECO:0007669"/>
    <property type="project" value="UniProtKB-UniRule"/>
</dbReference>
<dbReference type="CDD" id="cd00331">
    <property type="entry name" value="IGPS"/>
    <property type="match status" value="1"/>
</dbReference>
<dbReference type="FunFam" id="3.20.20.70:FF:000024">
    <property type="entry name" value="Indole-3-glycerol phosphate synthase"/>
    <property type="match status" value="1"/>
</dbReference>
<dbReference type="Gene3D" id="3.20.20.70">
    <property type="entry name" value="Aldolase class I"/>
    <property type="match status" value="1"/>
</dbReference>
<dbReference type="HAMAP" id="MF_00134_B">
    <property type="entry name" value="IGPS_B"/>
    <property type="match status" value="1"/>
</dbReference>
<dbReference type="InterPro" id="IPR013785">
    <property type="entry name" value="Aldolase_TIM"/>
</dbReference>
<dbReference type="InterPro" id="IPR045186">
    <property type="entry name" value="Indole-3-glycerol_P_synth"/>
</dbReference>
<dbReference type="InterPro" id="IPR013798">
    <property type="entry name" value="Indole-3-glycerol_P_synth_dom"/>
</dbReference>
<dbReference type="InterPro" id="IPR011060">
    <property type="entry name" value="RibuloseP-bd_barrel"/>
</dbReference>
<dbReference type="NCBIfam" id="NF001377">
    <property type="entry name" value="PRK00278.2-4"/>
    <property type="match status" value="1"/>
</dbReference>
<dbReference type="PANTHER" id="PTHR22854:SF2">
    <property type="entry name" value="INDOLE-3-GLYCEROL-PHOSPHATE SYNTHASE"/>
    <property type="match status" value="1"/>
</dbReference>
<dbReference type="PANTHER" id="PTHR22854">
    <property type="entry name" value="TRYPTOPHAN BIOSYNTHESIS PROTEIN"/>
    <property type="match status" value="1"/>
</dbReference>
<dbReference type="Pfam" id="PF00218">
    <property type="entry name" value="IGPS"/>
    <property type="match status" value="1"/>
</dbReference>
<dbReference type="SUPFAM" id="SSF51366">
    <property type="entry name" value="Ribulose-phoshate binding barrel"/>
    <property type="match status" value="1"/>
</dbReference>
<proteinExistence type="inferred from homology"/>
<gene>
    <name evidence="1" type="primary">trpC</name>
    <name type="ordered locus">DNO_0585</name>
</gene>
<comment type="catalytic activity">
    <reaction evidence="1">
        <text>1-(2-carboxyphenylamino)-1-deoxy-D-ribulose 5-phosphate + H(+) = (1S,2R)-1-C-(indol-3-yl)glycerol 3-phosphate + CO2 + H2O</text>
        <dbReference type="Rhea" id="RHEA:23476"/>
        <dbReference type="ChEBI" id="CHEBI:15377"/>
        <dbReference type="ChEBI" id="CHEBI:15378"/>
        <dbReference type="ChEBI" id="CHEBI:16526"/>
        <dbReference type="ChEBI" id="CHEBI:58613"/>
        <dbReference type="ChEBI" id="CHEBI:58866"/>
        <dbReference type="EC" id="4.1.1.48"/>
    </reaction>
</comment>
<comment type="pathway">
    <text evidence="1">Amino-acid biosynthesis; L-tryptophan biosynthesis; L-tryptophan from chorismate: step 4/5.</text>
</comment>
<comment type="similarity">
    <text evidence="1">Belongs to the TrpC family.</text>
</comment>